<protein>
    <recommendedName>
        <fullName evidence="1">Tyrosine recombinase XerC</fullName>
    </recommendedName>
</protein>
<reference key="1">
    <citation type="journal article" date="2004" name="J. Bacteriol.">
        <title>Comparative genomics of two Leptospira interrogans serovars reveals novel insights into physiology and pathogenesis.</title>
        <authorList>
            <person name="Nascimento A.L.T.O."/>
            <person name="Ko A.I."/>
            <person name="Martins E.A.L."/>
            <person name="Monteiro-Vitorello C.B."/>
            <person name="Ho P.L."/>
            <person name="Haake D.A."/>
            <person name="Verjovski-Almeida S."/>
            <person name="Hartskeerl R.A."/>
            <person name="Marques M.V."/>
            <person name="Oliveira M.C."/>
            <person name="Menck C.F.M."/>
            <person name="Leite L.C.C."/>
            <person name="Carrer H."/>
            <person name="Coutinho L.L."/>
            <person name="Degrave W.M."/>
            <person name="Dellagostin O.A."/>
            <person name="El-Dorry H."/>
            <person name="Ferro E.S."/>
            <person name="Ferro M.I.T."/>
            <person name="Furlan L.R."/>
            <person name="Gamberini M."/>
            <person name="Giglioti E.A."/>
            <person name="Goes-Neto A."/>
            <person name="Goldman G.H."/>
            <person name="Goldman M.H.S."/>
            <person name="Harakava R."/>
            <person name="Jeronimo S.M.B."/>
            <person name="Junqueira-de-Azevedo I.L.M."/>
            <person name="Kimura E.T."/>
            <person name="Kuramae E.E."/>
            <person name="Lemos E.G.M."/>
            <person name="Lemos M.V.F."/>
            <person name="Marino C.L."/>
            <person name="Nunes L.R."/>
            <person name="de Oliveira R.C."/>
            <person name="Pereira G.G."/>
            <person name="Reis M.S."/>
            <person name="Schriefer A."/>
            <person name="Siqueira W.J."/>
            <person name="Sommer P."/>
            <person name="Tsai S.M."/>
            <person name="Simpson A.J.G."/>
            <person name="Ferro J.A."/>
            <person name="Camargo L.E.A."/>
            <person name="Kitajima J.P."/>
            <person name="Setubal J.C."/>
            <person name="Van Sluys M.A."/>
        </authorList>
    </citation>
    <scope>NUCLEOTIDE SEQUENCE [LARGE SCALE GENOMIC DNA]</scope>
    <source>
        <strain>Fiocruz L1-130</strain>
    </source>
</reference>
<organism>
    <name type="scientific">Leptospira interrogans serogroup Icterohaemorrhagiae serovar copenhageni (strain Fiocruz L1-130)</name>
    <dbReference type="NCBI Taxonomy" id="267671"/>
    <lineage>
        <taxon>Bacteria</taxon>
        <taxon>Pseudomonadati</taxon>
        <taxon>Spirochaetota</taxon>
        <taxon>Spirochaetia</taxon>
        <taxon>Leptospirales</taxon>
        <taxon>Leptospiraceae</taxon>
        <taxon>Leptospira</taxon>
    </lineage>
</organism>
<comment type="function">
    <text evidence="1">Site-specific tyrosine recombinase, which acts by catalyzing the cutting and rejoining of the recombining DNA molecules. The XerC-XerD complex is essential to convert dimers of the bacterial chromosome into monomers to permit their segregation at cell division. It also contributes to the segregational stability of plasmids.</text>
</comment>
<comment type="subunit">
    <text evidence="1">Forms a cyclic heterotetrameric complex composed of two molecules of XerC and two molecules of XerD.</text>
</comment>
<comment type="subcellular location">
    <subcellularLocation>
        <location evidence="1">Cytoplasm</location>
    </subcellularLocation>
</comment>
<comment type="similarity">
    <text evidence="1">Belongs to the 'phage' integrase family. XerC subfamily.</text>
</comment>
<comment type="sequence caution" evidence="4">
    <conflict type="erroneous initiation">
        <sequence resource="EMBL-CDS" id="AAS70194"/>
    </conflict>
    <text>Extended N-terminus.</text>
</comment>
<dbReference type="EMBL" id="AE016823">
    <property type="protein sequence ID" value="AAS70194.1"/>
    <property type="status" value="ALT_INIT"/>
    <property type="molecule type" value="Genomic_DNA"/>
</dbReference>
<dbReference type="RefSeq" id="WP_002079116.1">
    <property type="nucleotide sequence ID" value="NC_005823.1"/>
</dbReference>
<dbReference type="SMR" id="Q72RY9"/>
<dbReference type="GeneID" id="61144896"/>
<dbReference type="KEGG" id="lic:LIC_11599"/>
<dbReference type="HOGENOM" id="CLU_027562_9_2_12"/>
<dbReference type="Proteomes" id="UP000007037">
    <property type="component" value="Chromosome I"/>
</dbReference>
<dbReference type="GO" id="GO:0005737">
    <property type="term" value="C:cytoplasm"/>
    <property type="evidence" value="ECO:0007669"/>
    <property type="project" value="UniProtKB-SubCell"/>
</dbReference>
<dbReference type="GO" id="GO:0003677">
    <property type="term" value="F:DNA binding"/>
    <property type="evidence" value="ECO:0007669"/>
    <property type="project" value="UniProtKB-KW"/>
</dbReference>
<dbReference type="GO" id="GO:0009037">
    <property type="term" value="F:tyrosine-based site-specific recombinase activity"/>
    <property type="evidence" value="ECO:0007669"/>
    <property type="project" value="UniProtKB-UniRule"/>
</dbReference>
<dbReference type="GO" id="GO:0051301">
    <property type="term" value="P:cell division"/>
    <property type="evidence" value="ECO:0007669"/>
    <property type="project" value="UniProtKB-KW"/>
</dbReference>
<dbReference type="GO" id="GO:0007059">
    <property type="term" value="P:chromosome segregation"/>
    <property type="evidence" value="ECO:0007669"/>
    <property type="project" value="UniProtKB-UniRule"/>
</dbReference>
<dbReference type="GO" id="GO:0006313">
    <property type="term" value="P:DNA transposition"/>
    <property type="evidence" value="ECO:0007669"/>
    <property type="project" value="UniProtKB-UniRule"/>
</dbReference>
<dbReference type="CDD" id="cd00798">
    <property type="entry name" value="INT_XerDC_C"/>
    <property type="match status" value="1"/>
</dbReference>
<dbReference type="Gene3D" id="1.10.150.130">
    <property type="match status" value="1"/>
</dbReference>
<dbReference type="Gene3D" id="1.10.443.10">
    <property type="entry name" value="Intergrase catalytic core"/>
    <property type="match status" value="1"/>
</dbReference>
<dbReference type="HAMAP" id="MF_01808">
    <property type="entry name" value="Recomb_XerC_XerD"/>
    <property type="match status" value="1"/>
</dbReference>
<dbReference type="InterPro" id="IPR044068">
    <property type="entry name" value="CB"/>
</dbReference>
<dbReference type="InterPro" id="IPR011010">
    <property type="entry name" value="DNA_brk_join_enz"/>
</dbReference>
<dbReference type="InterPro" id="IPR013762">
    <property type="entry name" value="Integrase-like_cat_sf"/>
</dbReference>
<dbReference type="InterPro" id="IPR002104">
    <property type="entry name" value="Integrase_catalytic"/>
</dbReference>
<dbReference type="InterPro" id="IPR010998">
    <property type="entry name" value="Integrase_recombinase_N"/>
</dbReference>
<dbReference type="InterPro" id="IPR004107">
    <property type="entry name" value="Integrase_SAM-like_N"/>
</dbReference>
<dbReference type="InterPro" id="IPR011931">
    <property type="entry name" value="Recomb_XerC"/>
</dbReference>
<dbReference type="InterPro" id="IPR023009">
    <property type="entry name" value="Tyrosine_recombinase_XerC/XerD"/>
</dbReference>
<dbReference type="InterPro" id="IPR050090">
    <property type="entry name" value="Tyrosine_recombinase_XerCD"/>
</dbReference>
<dbReference type="NCBIfam" id="NF001399">
    <property type="entry name" value="PRK00283.1"/>
    <property type="match status" value="1"/>
</dbReference>
<dbReference type="NCBIfam" id="NF040815">
    <property type="entry name" value="recomb_XerA_Arch"/>
    <property type="match status" value="1"/>
</dbReference>
<dbReference type="NCBIfam" id="TIGR02224">
    <property type="entry name" value="recomb_XerC"/>
    <property type="match status" value="1"/>
</dbReference>
<dbReference type="PANTHER" id="PTHR30349">
    <property type="entry name" value="PHAGE INTEGRASE-RELATED"/>
    <property type="match status" value="1"/>
</dbReference>
<dbReference type="PANTHER" id="PTHR30349:SF77">
    <property type="entry name" value="TYROSINE RECOMBINASE XERC"/>
    <property type="match status" value="1"/>
</dbReference>
<dbReference type="Pfam" id="PF02899">
    <property type="entry name" value="Phage_int_SAM_1"/>
    <property type="match status" value="1"/>
</dbReference>
<dbReference type="Pfam" id="PF00589">
    <property type="entry name" value="Phage_integrase"/>
    <property type="match status" value="1"/>
</dbReference>
<dbReference type="SUPFAM" id="SSF56349">
    <property type="entry name" value="DNA breaking-rejoining enzymes"/>
    <property type="match status" value="1"/>
</dbReference>
<dbReference type="PROSITE" id="PS51900">
    <property type="entry name" value="CB"/>
    <property type="match status" value="1"/>
</dbReference>
<dbReference type="PROSITE" id="PS51898">
    <property type="entry name" value="TYR_RECOMBINASE"/>
    <property type="match status" value="1"/>
</dbReference>
<evidence type="ECO:0000255" key="1">
    <source>
        <dbReference type="HAMAP-Rule" id="MF_01808"/>
    </source>
</evidence>
<evidence type="ECO:0000255" key="2">
    <source>
        <dbReference type="PROSITE-ProRule" id="PRU01246"/>
    </source>
</evidence>
<evidence type="ECO:0000255" key="3">
    <source>
        <dbReference type="PROSITE-ProRule" id="PRU01248"/>
    </source>
</evidence>
<evidence type="ECO:0000305" key="4"/>
<gene>
    <name evidence="1" type="primary">xerC</name>
    <name type="ordered locus">LIC_11599</name>
</gene>
<feature type="chain" id="PRO_0000095300" description="Tyrosine recombinase XerC">
    <location>
        <begin position="1"/>
        <end position="311"/>
    </location>
</feature>
<feature type="domain" description="Core-binding (CB)" evidence="3">
    <location>
        <begin position="14"/>
        <end position="100"/>
    </location>
</feature>
<feature type="domain" description="Tyr recombinase" evidence="2">
    <location>
        <begin position="121"/>
        <end position="303"/>
    </location>
</feature>
<feature type="active site" evidence="1">
    <location>
        <position position="163"/>
    </location>
</feature>
<feature type="active site" evidence="1">
    <location>
        <position position="187"/>
    </location>
</feature>
<feature type="active site" evidence="1">
    <location>
        <position position="255"/>
    </location>
</feature>
<feature type="active site" evidence="1">
    <location>
        <position position="258"/>
    </location>
</feature>
<feature type="active site" evidence="1">
    <location>
        <position position="281"/>
    </location>
</feature>
<feature type="active site" description="O-(3'-phospho-DNA)-tyrosine intermediate" evidence="1">
    <location>
        <position position="290"/>
    </location>
</feature>
<name>XERC_LEPIC</name>
<accession>Q72RY9</accession>
<keyword id="KW-0131">Cell cycle</keyword>
<keyword id="KW-0132">Cell division</keyword>
<keyword id="KW-0159">Chromosome partition</keyword>
<keyword id="KW-0963">Cytoplasm</keyword>
<keyword id="KW-0229">DNA integration</keyword>
<keyword id="KW-0233">DNA recombination</keyword>
<keyword id="KW-0238">DNA-binding</keyword>
<sequence length="311" mass="36547">MGDYPFQFPEFSSESLNETAKKFINYLKIEKNYSQNTINAYSIDLKFFFEFCEKEQLDIFQIEPVDIRSYFAYLAKKHEIDRRSQSRKLSSLRTFYKVLLREDLVKSNPATQLSFPKVRKEVPKNFRINETEEILEFESENASEVSEIRDRAMIEVLYSSGLRVFELVNAKLNSLSKDLTVLKVLGKGRKERFVYFGKEAVSSLQKYLEYRNVSFPDAEEIFLNQRGKKLTTRGVRYILNERRKKMGWEKTITPHKFRHTFATDLLDAGAEIRAVQELLGHSSLSTTQIYLSVSKEKIKEVYRKAHPHARK</sequence>
<proteinExistence type="inferred from homology"/>